<accession>Q8DMC5</accession>
<evidence type="ECO:0000250" key="1">
    <source>
        <dbReference type="UniProtKB" id="P73276"/>
    </source>
</evidence>
<evidence type="ECO:0000255" key="2"/>
<evidence type="ECO:0000255" key="3">
    <source>
        <dbReference type="PROSITE-ProRule" id="PRU00107"/>
    </source>
</evidence>
<evidence type="ECO:0000269" key="4">
    <source>
    </source>
</evidence>
<evidence type="ECO:0000303" key="5">
    <source>
    </source>
</evidence>
<evidence type="ECO:0000305" key="6"/>
<evidence type="ECO:0000305" key="7">
    <source>
    </source>
</evidence>
<evidence type="ECO:0000312" key="8">
    <source>
        <dbReference type="EMBL" id="BAC07748.1"/>
    </source>
</evidence>
<reference key="1">
    <citation type="journal article" date="2002" name="DNA Res.">
        <title>Complete genome structure of the thermophilic cyanobacterium Thermosynechococcus elongatus BP-1.</title>
        <authorList>
            <person name="Nakamura Y."/>
            <person name="Kaneko T."/>
            <person name="Sato S."/>
            <person name="Ikeuchi M."/>
            <person name="Katoh H."/>
            <person name="Sasamoto S."/>
            <person name="Watanabe A."/>
            <person name="Iriguchi M."/>
            <person name="Kawashima K."/>
            <person name="Kimura T."/>
            <person name="Kishida Y."/>
            <person name="Kiyokawa C."/>
            <person name="Kohara M."/>
            <person name="Matsumoto M."/>
            <person name="Matsuno A."/>
            <person name="Nakazaki N."/>
            <person name="Shimpo S."/>
            <person name="Sugimoto M."/>
            <person name="Takeuchi C."/>
            <person name="Yamada M."/>
            <person name="Tabata S."/>
        </authorList>
    </citation>
    <scope>NUCLEOTIDE SEQUENCE [LARGE SCALE GENOMIC DNA]</scope>
    <source>
        <strain>NIES-2133 / IAM M-273 / BP-1</strain>
    </source>
</reference>
<reference key="2">
    <citation type="journal article" date="2018" name="Protoplasma">
        <title>Oligomeric states in sodium ion-dependent regulation of cyanobacterial histidine kinase-2.</title>
        <authorList>
            <person name="Ibrahim I.M."/>
            <person name="Wang L."/>
            <person name="Puthiyaveetil S."/>
            <person name="Krauss N."/>
            <person name="Nield J."/>
            <person name="Allen J.F."/>
        </authorList>
    </citation>
    <scope>SUBUNIT</scope>
    <scope>DOMAIN</scope>
    <source>
        <strain>NIES-2133 / IAM M-273 / BP-1</strain>
    </source>
</reference>
<gene>
    <name evidence="5" type="primary">hik2</name>
    <name evidence="8" type="ordered locus">tlr0195</name>
</gene>
<proteinExistence type="evidence at protein level"/>
<protein>
    <recommendedName>
        <fullName evidence="5">Sensor histidine kinase Hik2</fullName>
        <ecNumber>2.7.13.3</ecNumber>
    </recommendedName>
</protein>
<keyword id="KW-0003">3Fe-4S</keyword>
<keyword id="KW-0408">Iron</keyword>
<keyword id="KW-0411">Iron-sulfur</keyword>
<keyword id="KW-0418">Kinase</keyword>
<keyword id="KW-0479">Metal-binding</keyword>
<keyword id="KW-0597">Phosphoprotein</keyword>
<keyword id="KW-1185">Reference proteome</keyword>
<keyword id="KW-0808">Transferase</keyword>
<keyword id="KW-0902">Two-component regulatory system</keyword>
<feature type="chain" id="PRO_0000453141" description="Sensor histidine kinase Hik2">
    <location>
        <begin position="1"/>
        <end position="385"/>
    </location>
</feature>
<feature type="domain" description="GAF" evidence="2">
    <location>
        <begin position="11"/>
        <end position="131"/>
    </location>
</feature>
<feature type="domain" description="Histidine kinase" evidence="3">
    <location>
        <begin position="158"/>
        <end position="381"/>
    </location>
</feature>
<feature type="region of interest" description="DHp domain, may sense NaCl" evidence="7">
    <location>
        <begin position="142"/>
        <end position="270"/>
    </location>
</feature>
<feature type="binding site" evidence="1">
    <location>
        <position position="13"/>
    </location>
    <ligand>
        <name>[3Fe-4S] cluster</name>
        <dbReference type="ChEBI" id="CHEBI:21137"/>
    </ligand>
</feature>
<feature type="modified residue" description="Phosphohistidine; by autocatalysis" evidence="3">
    <location>
        <position position="161"/>
    </location>
</feature>
<organism>
    <name type="scientific">Thermosynechococcus vestitus (strain NIES-2133 / IAM M-273 / BP-1)</name>
    <dbReference type="NCBI Taxonomy" id="197221"/>
    <lineage>
        <taxon>Bacteria</taxon>
        <taxon>Bacillati</taxon>
        <taxon>Cyanobacteriota</taxon>
        <taxon>Cyanophyceae</taxon>
        <taxon>Acaryochloridales</taxon>
        <taxon>Thermosynechococcaceae</taxon>
        <taxon>Thermosynechococcus</taxon>
    </lineage>
</organism>
<name>HIK2_THEVB</name>
<dbReference type="EC" id="2.7.13.3"/>
<dbReference type="EMBL" id="BA000039">
    <property type="protein sequence ID" value="BAC07748.1"/>
    <property type="molecule type" value="Genomic_DNA"/>
</dbReference>
<dbReference type="RefSeq" id="NP_680986.1">
    <property type="nucleotide sequence ID" value="NC_004113.1"/>
</dbReference>
<dbReference type="RefSeq" id="WP_011056050.1">
    <property type="nucleotide sequence ID" value="NC_004113.1"/>
</dbReference>
<dbReference type="SMR" id="Q8DMC5"/>
<dbReference type="STRING" id="197221.gene:10746776"/>
<dbReference type="EnsemblBacteria" id="BAC07748">
    <property type="protein sequence ID" value="BAC07748"/>
    <property type="gene ID" value="BAC07748"/>
</dbReference>
<dbReference type="KEGG" id="tel:tlr0195"/>
<dbReference type="eggNOG" id="COG2205">
    <property type="taxonomic scope" value="Bacteria"/>
</dbReference>
<dbReference type="Proteomes" id="UP000000440">
    <property type="component" value="Chromosome"/>
</dbReference>
<dbReference type="GO" id="GO:0051538">
    <property type="term" value="F:3 iron, 4 sulfur cluster binding"/>
    <property type="evidence" value="ECO:0007669"/>
    <property type="project" value="UniProtKB-KW"/>
</dbReference>
<dbReference type="GO" id="GO:0046872">
    <property type="term" value="F:metal ion binding"/>
    <property type="evidence" value="ECO:0007669"/>
    <property type="project" value="UniProtKB-KW"/>
</dbReference>
<dbReference type="GO" id="GO:0000155">
    <property type="term" value="F:phosphorelay sensor kinase activity"/>
    <property type="evidence" value="ECO:0007669"/>
    <property type="project" value="InterPro"/>
</dbReference>
<dbReference type="CDD" id="cd00075">
    <property type="entry name" value="HATPase"/>
    <property type="match status" value="1"/>
</dbReference>
<dbReference type="CDD" id="cd00082">
    <property type="entry name" value="HisKA"/>
    <property type="match status" value="1"/>
</dbReference>
<dbReference type="Gene3D" id="1.10.287.130">
    <property type="match status" value="1"/>
</dbReference>
<dbReference type="Gene3D" id="3.30.450.40">
    <property type="match status" value="1"/>
</dbReference>
<dbReference type="Gene3D" id="3.30.565.10">
    <property type="entry name" value="Histidine kinase-like ATPase, C-terminal domain"/>
    <property type="match status" value="1"/>
</dbReference>
<dbReference type="InterPro" id="IPR003018">
    <property type="entry name" value="GAF"/>
</dbReference>
<dbReference type="InterPro" id="IPR029016">
    <property type="entry name" value="GAF-like_dom_sf"/>
</dbReference>
<dbReference type="InterPro" id="IPR036890">
    <property type="entry name" value="HATPase_C_sf"/>
</dbReference>
<dbReference type="InterPro" id="IPR005467">
    <property type="entry name" value="His_kinase_dom"/>
</dbReference>
<dbReference type="InterPro" id="IPR003661">
    <property type="entry name" value="HisK_dim/P_dom"/>
</dbReference>
<dbReference type="InterPro" id="IPR036097">
    <property type="entry name" value="HisK_dim/P_sf"/>
</dbReference>
<dbReference type="InterPro" id="IPR004358">
    <property type="entry name" value="Sig_transdc_His_kin-like_C"/>
</dbReference>
<dbReference type="PANTHER" id="PTHR43547:SF2">
    <property type="entry name" value="HYBRID SIGNAL TRANSDUCTION HISTIDINE KINASE C"/>
    <property type="match status" value="1"/>
</dbReference>
<dbReference type="PANTHER" id="PTHR43547">
    <property type="entry name" value="TWO-COMPONENT HISTIDINE KINASE"/>
    <property type="match status" value="1"/>
</dbReference>
<dbReference type="Pfam" id="PF01590">
    <property type="entry name" value="GAF"/>
    <property type="match status" value="1"/>
</dbReference>
<dbReference type="Pfam" id="PF02518">
    <property type="entry name" value="HATPase_c"/>
    <property type="match status" value="1"/>
</dbReference>
<dbReference type="Pfam" id="PF00512">
    <property type="entry name" value="HisKA"/>
    <property type="match status" value="1"/>
</dbReference>
<dbReference type="PRINTS" id="PR00344">
    <property type="entry name" value="BCTRLSENSOR"/>
</dbReference>
<dbReference type="SMART" id="SM00065">
    <property type="entry name" value="GAF"/>
    <property type="match status" value="1"/>
</dbReference>
<dbReference type="SMART" id="SM00387">
    <property type="entry name" value="HATPase_c"/>
    <property type="match status" value="1"/>
</dbReference>
<dbReference type="SMART" id="SM00388">
    <property type="entry name" value="HisKA"/>
    <property type="match status" value="1"/>
</dbReference>
<dbReference type="SUPFAM" id="SSF55874">
    <property type="entry name" value="ATPase domain of HSP90 chaperone/DNA topoisomerase II/histidine kinase"/>
    <property type="match status" value="1"/>
</dbReference>
<dbReference type="SUPFAM" id="SSF55781">
    <property type="entry name" value="GAF domain-like"/>
    <property type="match status" value="1"/>
</dbReference>
<dbReference type="SUPFAM" id="SSF47384">
    <property type="entry name" value="Homodimeric domain of signal transducing histidine kinase"/>
    <property type="match status" value="1"/>
</dbReference>
<dbReference type="PROSITE" id="PS50109">
    <property type="entry name" value="HIS_KIN"/>
    <property type="match status" value="1"/>
</dbReference>
<sequence length="385" mass="42417">MLWPASEEFAALCRTQLELVVNSLGASSLAVYLSETLNDSPSWSPVAVYPEAASLLSLAIPPTLPPPTQVPETSLSHYPQQVVSSLANQLILPLMYQNWVLGVLVAQRQHRPWLAAEQAQLQQVAQTLAIACVLDQRQQWLSHSPAQPLDQRQQRFDDLLHQLRNPVAAIRTFVKLLLKRLEPDHKGRPLAEGIAKETERLMALLEDYRQQRNDIPALTGSQPLPLAGKPLDLAETLLPLISAAQARAEMEGKTFVVEIPPQLPPIWLEERVLQEVVGNLLDNAFKYTPKGGTIGLRLMLSSPALELTVWDTGCGIPKEAQPRLFERGYRGVQADSGIEGSGLGLAIAQDLLRPYGLSLRVTSPYAGDRGTAFTLAIPWQMKVEP</sequence>
<comment type="function">
    <text evidence="1">Member of 2 two-component regulatory system(s) Hik2/Rre1 and Hik2/RppA. Transduces PQ (plastoquinone) redox signals to photosystem gene expression machinery during the adjustment of photosystem stoichiometry. Reduced PQ suppresses its autophosphorylation activity (i.e. kinase activity is higher under oxidizing conditions). As part of a two-component regulatory system with Rre1, controls expression of sigB and several other genes in response to hyperosmotic stress. May transfer phosphate to RppA in a possible Hik2/RppA two-component system.</text>
</comment>
<comment type="catalytic activity">
    <reaction evidence="1">
        <text>ATP + protein L-histidine = ADP + protein N-phospho-L-histidine.</text>
        <dbReference type="EC" id="2.7.13.3"/>
    </reaction>
</comment>
<comment type="cofactor">
    <cofactor evidence="1">
        <name>[3Fe-4S] cluster</name>
        <dbReference type="ChEBI" id="CHEBI:21137"/>
    </cofactor>
    <text evidence="1">The 3Fe-4S cluster is redox-responsive, binds 1 cluster per monomer.</text>
</comment>
<comment type="subunit">
    <text evidence="4">Hexamers; upon treatment with 0.5 M NaCl only tetramers are seen. The tetramers are probably inactive.</text>
</comment>
<comment type="domain">
    <text evidence="4">Oligomerization seems to be mediated by the histidine kinase domain (residues 142-386) which forms tetramers and hexamers. The DHp subdomain (dimerization and phosphotransfer, residues 142-270) forms hexamers and octamers. NaCl treatment reduces the histidine kinase domain to tetramers and the DHp domain to hexamers, suggests the DHp domain senses NaCl.</text>
</comment>
<comment type="PTM">
    <text evidence="1">Autophosphorylates, possibly on His-161.</text>
</comment>
<comment type="similarity">
    <text evidence="6">Belongs to the chloroplast sensor kinase protein family.</text>
</comment>